<dbReference type="EC" id="2.7.1.130" evidence="1"/>
<dbReference type="EMBL" id="AE013598">
    <property type="protein sequence ID" value="AAW75550.1"/>
    <property type="molecule type" value="Genomic_DNA"/>
</dbReference>
<dbReference type="SMR" id="Q5H0H1"/>
<dbReference type="STRING" id="291331.XOO2296"/>
<dbReference type="KEGG" id="xoo:XOO2296"/>
<dbReference type="HOGENOM" id="CLU_038816_2_0_6"/>
<dbReference type="UniPathway" id="UPA00359">
    <property type="reaction ID" value="UER00482"/>
</dbReference>
<dbReference type="Proteomes" id="UP000006735">
    <property type="component" value="Chromosome"/>
</dbReference>
<dbReference type="GO" id="GO:0005886">
    <property type="term" value="C:plasma membrane"/>
    <property type="evidence" value="ECO:0007669"/>
    <property type="project" value="TreeGrafter"/>
</dbReference>
<dbReference type="GO" id="GO:0005524">
    <property type="term" value="F:ATP binding"/>
    <property type="evidence" value="ECO:0007669"/>
    <property type="project" value="UniProtKB-UniRule"/>
</dbReference>
<dbReference type="GO" id="GO:0009029">
    <property type="term" value="F:tetraacyldisaccharide 4'-kinase activity"/>
    <property type="evidence" value="ECO:0007669"/>
    <property type="project" value="UniProtKB-UniRule"/>
</dbReference>
<dbReference type="GO" id="GO:0009245">
    <property type="term" value="P:lipid A biosynthetic process"/>
    <property type="evidence" value="ECO:0007669"/>
    <property type="project" value="UniProtKB-UniRule"/>
</dbReference>
<dbReference type="GO" id="GO:0009244">
    <property type="term" value="P:lipopolysaccharide core region biosynthetic process"/>
    <property type="evidence" value="ECO:0007669"/>
    <property type="project" value="TreeGrafter"/>
</dbReference>
<dbReference type="HAMAP" id="MF_00409">
    <property type="entry name" value="LpxK"/>
    <property type="match status" value="1"/>
</dbReference>
<dbReference type="InterPro" id="IPR003758">
    <property type="entry name" value="LpxK"/>
</dbReference>
<dbReference type="InterPro" id="IPR027417">
    <property type="entry name" value="P-loop_NTPase"/>
</dbReference>
<dbReference type="NCBIfam" id="TIGR00682">
    <property type="entry name" value="lpxK"/>
    <property type="match status" value="1"/>
</dbReference>
<dbReference type="PANTHER" id="PTHR42724">
    <property type="entry name" value="TETRAACYLDISACCHARIDE 4'-KINASE"/>
    <property type="match status" value="1"/>
</dbReference>
<dbReference type="PANTHER" id="PTHR42724:SF1">
    <property type="entry name" value="TETRAACYLDISACCHARIDE 4'-KINASE, MITOCHONDRIAL-RELATED"/>
    <property type="match status" value="1"/>
</dbReference>
<dbReference type="Pfam" id="PF02606">
    <property type="entry name" value="LpxK"/>
    <property type="match status" value="1"/>
</dbReference>
<dbReference type="SUPFAM" id="SSF52540">
    <property type="entry name" value="P-loop containing nucleoside triphosphate hydrolases"/>
    <property type="match status" value="1"/>
</dbReference>
<evidence type="ECO:0000255" key="1">
    <source>
        <dbReference type="HAMAP-Rule" id="MF_00409"/>
    </source>
</evidence>
<keyword id="KW-0067">ATP-binding</keyword>
<keyword id="KW-0418">Kinase</keyword>
<keyword id="KW-0441">Lipid A biosynthesis</keyword>
<keyword id="KW-0444">Lipid biosynthesis</keyword>
<keyword id="KW-0443">Lipid metabolism</keyword>
<keyword id="KW-0547">Nucleotide-binding</keyword>
<keyword id="KW-1185">Reference proteome</keyword>
<keyword id="KW-0808">Transferase</keyword>
<name>LPXK_XANOR</name>
<reference key="1">
    <citation type="journal article" date="2005" name="Nucleic Acids Res.">
        <title>The genome sequence of Xanthomonas oryzae pathovar oryzae KACC10331, the bacterial blight pathogen of rice.</title>
        <authorList>
            <person name="Lee B.-M."/>
            <person name="Park Y.-J."/>
            <person name="Park D.-S."/>
            <person name="Kang H.-W."/>
            <person name="Kim J.-G."/>
            <person name="Song E.-S."/>
            <person name="Park I.-C."/>
            <person name="Yoon U.-H."/>
            <person name="Hahn J.-H."/>
            <person name="Koo B.-S."/>
            <person name="Lee G.-B."/>
            <person name="Kim H."/>
            <person name="Park H.-S."/>
            <person name="Yoon K.-O."/>
            <person name="Kim J.-H."/>
            <person name="Jung C.-H."/>
            <person name="Koh N.-H."/>
            <person name="Seo J.-S."/>
            <person name="Go S.-J."/>
        </authorList>
    </citation>
    <scope>NUCLEOTIDE SEQUENCE [LARGE SCALE GENOMIC DNA]</scope>
    <source>
        <strain>KACC10331 / KXO85</strain>
    </source>
</reference>
<sequence>MSKRGARTPGFWYDNNTPIPLPARILVPVYGAAIALRRALYRRGWRKRHGVPVPVIVVGNVTAGGTGKTPLTIALVAKLQEAGWTPGVASRGYGRDEAGKARWVEADTPVALGGDEPVLIAWKTGARVRVDSDRLAAARALVEAGCDIVICDDGLQHYRLARDVEIEVVDGQRRYGNGRLLPAGPLREPVARARDCDFRVVNLGQASTTAAPQAPDDAGFGEWQMRLSIDSVQPMDGKRAQPLSMLAGQRVHAVAGIAYPERFFAMLRARGIGVVPHAFPDHHVYRAADFSFGSRLPVLMTEKDAVKCRPFADEWLYSVPLKAELPAAFWVSLLDRLNKLASRQGV</sequence>
<comment type="function">
    <text evidence="1">Transfers the gamma-phosphate of ATP to the 4'-position of a tetraacyldisaccharide 1-phosphate intermediate (termed DS-1-P) to form tetraacyldisaccharide 1,4'-bis-phosphate (lipid IVA).</text>
</comment>
<comment type="catalytic activity">
    <reaction evidence="1">
        <text>a lipid A disaccharide + ATP = a lipid IVA + ADP + H(+)</text>
        <dbReference type="Rhea" id="RHEA:67840"/>
        <dbReference type="ChEBI" id="CHEBI:15378"/>
        <dbReference type="ChEBI" id="CHEBI:30616"/>
        <dbReference type="ChEBI" id="CHEBI:176343"/>
        <dbReference type="ChEBI" id="CHEBI:176425"/>
        <dbReference type="ChEBI" id="CHEBI:456216"/>
        <dbReference type="EC" id="2.7.1.130"/>
    </reaction>
</comment>
<comment type="pathway">
    <text evidence="1">Glycolipid biosynthesis; lipid IV(A) biosynthesis; lipid IV(A) from (3R)-3-hydroxytetradecanoyl-[acyl-carrier-protein] and UDP-N-acetyl-alpha-D-glucosamine: step 6/6.</text>
</comment>
<comment type="similarity">
    <text evidence="1">Belongs to the LpxK family.</text>
</comment>
<feature type="chain" id="PRO_0000229989" description="Tetraacyldisaccharide 4'-kinase">
    <location>
        <begin position="1"/>
        <end position="346"/>
    </location>
</feature>
<feature type="binding site" evidence="1">
    <location>
        <begin position="62"/>
        <end position="69"/>
    </location>
    <ligand>
        <name>ATP</name>
        <dbReference type="ChEBI" id="CHEBI:30616"/>
    </ligand>
</feature>
<protein>
    <recommendedName>
        <fullName evidence="1">Tetraacyldisaccharide 4'-kinase</fullName>
        <ecNumber evidence="1">2.7.1.130</ecNumber>
    </recommendedName>
    <alternativeName>
        <fullName evidence="1">Lipid A 4'-kinase</fullName>
    </alternativeName>
</protein>
<gene>
    <name evidence="1" type="primary">lpxK</name>
    <name type="ordered locus">XOO2296</name>
</gene>
<proteinExistence type="inferred from homology"/>
<accession>Q5H0H1</accession>
<organism>
    <name type="scientific">Xanthomonas oryzae pv. oryzae (strain KACC10331 / KXO85)</name>
    <dbReference type="NCBI Taxonomy" id="291331"/>
    <lineage>
        <taxon>Bacteria</taxon>
        <taxon>Pseudomonadati</taxon>
        <taxon>Pseudomonadota</taxon>
        <taxon>Gammaproteobacteria</taxon>
        <taxon>Lysobacterales</taxon>
        <taxon>Lysobacteraceae</taxon>
        <taxon>Xanthomonas</taxon>
    </lineage>
</organism>